<proteinExistence type="inferred from homology"/>
<sequence length="316" mass="36496">MIKSERPQAYIGRFAPSPSGDLHFGSLITAIGSYLQARACQGKWLIRIDDIDPPREVPGAASRILHALEHYGLHWDGEILYQSQRHEAYCHVLNQLQQQGLSYYCTCTRQRIHQINGFYDRNCRELNLPIDHAAIRFKQRHPVYGFEDKLQGYLNADPVMAEEDFIIHRRDGLFAYNLVVVIDDDYQGVTEVVRGVDLIEPTVRQIALYRQLNLKIPDYIHLPLALNKDGNKLSKQNHAQPIPLDDPRPLLIEALSFLNQSVIENWQDLSRDQLLQKATAHWDLDRIPRQGKIHIDNMNKVTVSHNNHSQKIHSRL</sequence>
<evidence type="ECO:0000255" key="1">
    <source>
        <dbReference type="HAMAP-Rule" id="MF_01428"/>
    </source>
</evidence>
<feature type="chain" id="PRO_0000208311" description="Glutamyl-Q tRNA(Asp) synthetase">
    <location>
        <begin position="1"/>
        <end position="316"/>
    </location>
</feature>
<feature type="short sequence motif" description="'HIGH' region">
    <location>
        <begin position="16"/>
        <end position="26"/>
    </location>
</feature>
<feature type="short sequence motif" description="'KMSKS' region">
    <location>
        <begin position="232"/>
        <end position="236"/>
    </location>
</feature>
<feature type="binding site" evidence="1">
    <location>
        <begin position="13"/>
        <end position="17"/>
    </location>
    <ligand>
        <name>L-glutamate</name>
        <dbReference type="ChEBI" id="CHEBI:29985"/>
    </ligand>
</feature>
<feature type="binding site" evidence="1">
    <location>
        <position position="49"/>
    </location>
    <ligand>
        <name>L-glutamate</name>
        <dbReference type="ChEBI" id="CHEBI:29985"/>
    </ligand>
</feature>
<feature type="binding site" evidence="1">
    <location>
        <position position="105"/>
    </location>
    <ligand>
        <name>Zn(2+)</name>
        <dbReference type="ChEBI" id="CHEBI:29105"/>
    </ligand>
</feature>
<feature type="binding site" evidence="1">
    <location>
        <position position="107"/>
    </location>
    <ligand>
        <name>Zn(2+)</name>
        <dbReference type="ChEBI" id="CHEBI:29105"/>
    </ligand>
</feature>
<feature type="binding site" evidence="1">
    <location>
        <position position="119"/>
    </location>
    <ligand>
        <name>Zn(2+)</name>
        <dbReference type="ChEBI" id="CHEBI:29105"/>
    </ligand>
</feature>
<feature type="binding site" evidence="1">
    <location>
        <position position="123"/>
    </location>
    <ligand>
        <name>Zn(2+)</name>
        <dbReference type="ChEBI" id="CHEBI:29105"/>
    </ligand>
</feature>
<feature type="binding site" evidence="1">
    <location>
        <position position="176"/>
    </location>
    <ligand>
        <name>L-glutamate</name>
        <dbReference type="ChEBI" id="CHEBI:29985"/>
    </ligand>
</feature>
<feature type="binding site" evidence="1">
    <location>
        <position position="194"/>
    </location>
    <ligand>
        <name>L-glutamate</name>
        <dbReference type="ChEBI" id="CHEBI:29985"/>
    </ligand>
</feature>
<feature type="binding site" evidence="1">
    <location>
        <position position="235"/>
    </location>
    <ligand>
        <name>ATP</name>
        <dbReference type="ChEBI" id="CHEBI:30616"/>
    </ligand>
</feature>
<comment type="function">
    <text evidence="1">Catalyzes the tRNA-independent activation of glutamate in presence of ATP and the subsequent transfer of glutamate onto a tRNA(Asp). Glutamate is transferred on the 2-amino-5-(4,5-dihydroxy-2-cyclopenten-1-yl) moiety of the queuosine in the wobble position of the QUC anticodon.</text>
</comment>
<comment type="cofactor">
    <cofactor evidence="1">
        <name>Zn(2+)</name>
        <dbReference type="ChEBI" id="CHEBI:29105"/>
    </cofactor>
    <text evidence="1">Binds 1 zinc ion per subunit.</text>
</comment>
<comment type="similarity">
    <text evidence="1">Belongs to the class-I aminoacyl-tRNA synthetase family. GluQ subfamily.</text>
</comment>
<protein>
    <recommendedName>
        <fullName evidence="1">Glutamyl-Q tRNA(Asp) synthetase</fullName>
        <shortName evidence="1">Glu-Q-RSs</shortName>
        <ecNumber evidence="1">6.1.1.-</ecNumber>
    </recommendedName>
</protein>
<organism>
    <name type="scientific">Photorhabdus laumondii subsp. laumondii (strain DSM 15139 / CIP 105565 / TT01)</name>
    <name type="common">Photorhabdus luminescens subsp. laumondii</name>
    <dbReference type="NCBI Taxonomy" id="243265"/>
    <lineage>
        <taxon>Bacteria</taxon>
        <taxon>Pseudomonadati</taxon>
        <taxon>Pseudomonadota</taxon>
        <taxon>Gammaproteobacteria</taxon>
        <taxon>Enterobacterales</taxon>
        <taxon>Morganellaceae</taxon>
        <taxon>Photorhabdus</taxon>
    </lineage>
</organism>
<accession>Q7N866</accession>
<reference key="1">
    <citation type="journal article" date="2003" name="Nat. Biotechnol.">
        <title>The genome sequence of the entomopathogenic bacterium Photorhabdus luminescens.</title>
        <authorList>
            <person name="Duchaud E."/>
            <person name="Rusniok C."/>
            <person name="Frangeul L."/>
            <person name="Buchrieser C."/>
            <person name="Givaudan A."/>
            <person name="Taourit S."/>
            <person name="Bocs S."/>
            <person name="Boursaux-Eude C."/>
            <person name="Chandler M."/>
            <person name="Charles J.-F."/>
            <person name="Dassa E."/>
            <person name="Derose R."/>
            <person name="Derzelle S."/>
            <person name="Freyssinet G."/>
            <person name="Gaudriault S."/>
            <person name="Medigue C."/>
            <person name="Lanois A."/>
            <person name="Powell K."/>
            <person name="Siguier P."/>
            <person name="Vincent R."/>
            <person name="Wingate V."/>
            <person name="Zouine M."/>
            <person name="Glaser P."/>
            <person name="Boemare N."/>
            <person name="Danchin A."/>
            <person name="Kunst F."/>
        </authorList>
    </citation>
    <scope>NUCLEOTIDE SEQUENCE [LARGE SCALE GENOMIC DNA]</scope>
    <source>
        <strain>DSM 15139 / CIP 105565 / TT01</strain>
    </source>
</reference>
<keyword id="KW-0030">Aminoacyl-tRNA synthetase</keyword>
<keyword id="KW-0067">ATP-binding</keyword>
<keyword id="KW-0436">Ligase</keyword>
<keyword id="KW-0479">Metal-binding</keyword>
<keyword id="KW-0547">Nucleotide-binding</keyword>
<keyword id="KW-1185">Reference proteome</keyword>
<keyword id="KW-0862">Zinc</keyword>
<name>GLUQ_PHOLL</name>
<dbReference type="EC" id="6.1.1.-" evidence="1"/>
<dbReference type="EMBL" id="BX571861">
    <property type="protein sequence ID" value="CAE13170.1"/>
    <property type="molecule type" value="Genomic_DNA"/>
</dbReference>
<dbReference type="RefSeq" id="WP_011145243.1">
    <property type="nucleotide sequence ID" value="NC_005126.1"/>
</dbReference>
<dbReference type="SMR" id="Q7N866"/>
<dbReference type="STRING" id="243265.plu0875"/>
<dbReference type="GeneID" id="48847164"/>
<dbReference type="KEGG" id="plu:plu0875"/>
<dbReference type="eggNOG" id="COG0008">
    <property type="taxonomic scope" value="Bacteria"/>
</dbReference>
<dbReference type="HOGENOM" id="CLU_015768_0_1_6"/>
<dbReference type="OrthoDB" id="9807503at2"/>
<dbReference type="Proteomes" id="UP000002514">
    <property type="component" value="Chromosome"/>
</dbReference>
<dbReference type="GO" id="GO:0005829">
    <property type="term" value="C:cytosol"/>
    <property type="evidence" value="ECO:0007669"/>
    <property type="project" value="TreeGrafter"/>
</dbReference>
<dbReference type="GO" id="GO:0005524">
    <property type="term" value="F:ATP binding"/>
    <property type="evidence" value="ECO:0007669"/>
    <property type="project" value="UniProtKB-KW"/>
</dbReference>
<dbReference type="GO" id="GO:0004818">
    <property type="term" value="F:glutamate-tRNA ligase activity"/>
    <property type="evidence" value="ECO:0007669"/>
    <property type="project" value="TreeGrafter"/>
</dbReference>
<dbReference type="GO" id="GO:0008270">
    <property type="term" value="F:zinc ion binding"/>
    <property type="evidence" value="ECO:0007669"/>
    <property type="project" value="UniProtKB-UniRule"/>
</dbReference>
<dbReference type="GO" id="GO:0006424">
    <property type="term" value="P:glutamyl-tRNA aminoacylation"/>
    <property type="evidence" value="ECO:0007669"/>
    <property type="project" value="InterPro"/>
</dbReference>
<dbReference type="GO" id="GO:0006400">
    <property type="term" value="P:tRNA modification"/>
    <property type="evidence" value="ECO:0007669"/>
    <property type="project" value="InterPro"/>
</dbReference>
<dbReference type="FunFam" id="3.40.50.620:FF:000093">
    <property type="entry name" value="Glutamyl-Q tRNA(Asp) synthetase"/>
    <property type="match status" value="1"/>
</dbReference>
<dbReference type="Gene3D" id="3.40.50.620">
    <property type="entry name" value="HUPs"/>
    <property type="match status" value="1"/>
</dbReference>
<dbReference type="HAMAP" id="MF_01428">
    <property type="entry name" value="Glu_Q_tRNA_synth"/>
    <property type="match status" value="1"/>
</dbReference>
<dbReference type="InterPro" id="IPR022380">
    <property type="entry name" value="Glu-Q_tRNA(Asp)_Synthase"/>
</dbReference>
<dbReference type="InterPro" id="IPR000924">
    <property type="entry name" value="Glu/Gln-tRNA-synth"/>
</dbReference>
<dbReference type="InterPro" id="IPR020058">
    <property type="entry name" value="Glu/Gln-tRNA-synth_Ib_cat-dom"/>
</dbReference>
<dbReference type="InterPro" id="IPR049940">
    <property type="entry name" value="GluQ/Sye"/>
</dbReference>
<dbReference type="InterPro" id="IPR014729">
    <property type="entry name" value="Rossmann-like_a/b/a_fold"/>
</dbReference>
<dbReference type="NCBIfam" id="NF004312">
    <property type="entry name" value="PRK05710.1-1"/>
    <property type="match status" value="1"/>
</dbReference>
<dbReference type="NCBIfam" id="NF004314">
    <property type="entry name" value="PRK05710.1-3"/>
    <property type="match status" value="1"/>
</dbReference>
<dbReference type="NCBIfam" id="TIGR03838">
    <property type="entry name" value="queuosine_YadB"/>
    <property type="match status" value="1"/>
</dbReference>
<dbReference type="PANTHER" id="PTHR43311">
    <property type="entry name" value="GLUTAMATE--TRNA LIGASE"/>
    <property type="match status" value="1"/>
</dbReference>
<dbReference type="PANTHER" id="PTHR43311:SF1">
    <property type="entry name" value="GLUTAMYL-Q TRNA(ASP) SYNTHETASE"/>
    <property type="match status" value="1"/>
</dbReference>
<dbReference type="Pfam" id="PF00749">
    <property type="entry name" value="tRNA-synt_1c"/>
    <property type="match status" value="1"/>
</dbReference>
<dbReference type="PRINTS" id="PR00987">
    <property type="entry name" value="TRNASYNTHGLU"/>
</dbReference>
<dbReference type="SUPFAM" id="SSF52374">
    <property type="entry name" value="Nucleotidylyl transferase"/>
    <property type="match status" value="1"/>
</dbReference>
<gene>
    <name evidence="1" type="primary">gluQ</name>
    <name type="ordered locus">plu0875</name>
</gene>